<evidence type="ECO:0000255" key="1">
    <source>
        <dbReference type="HAMAP-Rule" id="MF_00169"/>
    </source>
</evidence>
<keyword id="KW-0028">Amino-acid biosynthesis</keyword>
<keyword id="KW-0057">Aromatic amino acid biosynthesis</keyword>
<keyword id="KW-0456">Lyase</keyword>
<keyword id="KW-1185">Reference proteome</keyword>
<comment type="function">
    <text evidence="1">Catalyzes a trans-dehydration via an enolate intermediate.</text>
</comment>
<comment type="catalytic activity">
    <reaction evidence="1">
        <text>3-dehydroquinate = 3-dehydroshikimate + H2O</text>
        <dbReference type="Rhea" id="RHEA:21096"/>
        <dbReference type="ChEBI" id="CHEBI:15377"/>
        <dbReference type="ChEBI" id="CHEBI:16630"/>
        <dbReference type="ChEBI" id="CHEBI:32364"/>
        <dbReference type="EC" id="4.2.1.10"/>
    </reaction>
</comment>
<comment type="pathway">
    <text evidence="1">Metabolic intermediate biosynthesis; chorismate biosynthesis; chorismate from D-erythrose 4-phosphate and phosphoenolpyruvate: step 3/7.</text>
</comment>
<comment type="subunit">
    <text evidence="1">Homododecamer.</text>
</comment>
<comment type="similarity">
    <text evidence="1">Belongs to the type-II 3-dehydroquinase family.</text>
</comment>
<feature type="chain" id="PRO_0000159941" description="3-dehydroquinate dehydratase">
    <location>
        <begin position="1"/>
        <end position="166"/>
    </location>
</feature>
<feature type="active site" description="Proton acceptor" evidence="1">
    <location>
        <position position="22"/>
    </location>
</feature>
<feature type="active site" description="Proton donor" evidence="1">
    <location>
        <position position="99"/>
    </location>
</feature>
<feature type="binding site" evidence="1">
    <location>
        <position position="73"/>
    </location>
    <ligand>
        <name>substrate</name>
    </ligand>
</feature>
<feature type="binding site" evidence="1">
    <location>
        <position position="79"/>
    </location>
    <ligand>
        <name>substrate</name>
    </ligand>
</feature>
<feature type="binding site" evidence="1">
    <location>
        <position position="86"/>
    </location>
    <ligand>
        <name>substrate</name>
    </ligand>
</feature>
<feature type="binding site" evidence="1">
    <location>
        <begin position="100"/>
        <end position="101"/>
    </location>
    <ligand>
        <name>substrate</name>
    </ligand>
</feature>
<feature type="binding site" evidence="1">
    <location>
        <position position="110"/>
    </location>
    <ligand>
        <name>substrate</name>
    </ligand>
</feature>
<feature type="site" description="Transition state stabilizer" evidence="1">
    <location>
        <position position="17"/>
    </location>
</feature>
<accession>Q7M8I1</accession>
<gene>
    <name evidence="1" type="primary">aroQ</name>
    <name type="ordered locus">WS1645</name>
</gene>
<organism>
    <name type="scientific">Wolinella succinogenes (strain ATCC 29543 / DSM 1740 / CCUG 13145 / JCM 31913 / LMG 7466 / NCTC 11488 / FDC 602W)</name>
    <name type="common">Vibrio succinogenes</name>
    <dbReference type="NCBI Taxonomy" id="273121"/>
    <lineage>
        <taxon>Bacteria</taxon>
        <taxon>Pseudomonadati</taxon>
        <taxon>Campylobacterota</taxon>
        <taxon>Epsilonproteobacteria</taxon>
        <taxon>Campylobacterales</taxon>
        <taxon>Helicobacteraceae</taxon>
        <taxon>Wolinella</taxon>
    </lineage>
</organism>
<name>AROQ_WOLSU</name>
<sequence length="166" mass="18169">MKVVVIQGPNLNMLGIREQRLYGPMKLEQIHQNMKTFADQNGMEVEFFQSNLEGEIVDKIQECLGDADGIIINPAAYSHTSIAIRDAISAVSLPTLEVHITNIHAREEFRRHSLTAEVAAGVIAGFGPFGYHMAMIAMHQILSELGALKEAQAKAQAQAQEGAKES</sequence>
<reference key="1">
    <citation type="journal article" date="2003" name="Proc. Natl. Acad. Sci. U.S.A.">
        <title>Complete genome sequence and analysis of Wolinella succinogenes.</title>
        <authorList>
            <person name="Baar C."/>
            <person name="Eppinger M."/>
            <person name="Raddatz G."/>
            <person name="Simon J."/>
            <person name="Lanz C."/>
            <person name="Klimmek O."/>
            <person name="Nandakumar R."/>
            <person name="Gross R."/>
            <person name="Rosinus A."/>
            <person name="Keller H."/>
            <person name="Jagtap P."/>
            <person name="Linke B."/>
            <person name="Meyer F."/>
            <person name="Lederer H."/>
            <person name="Schuster S.C."/>
        </authorList>
    </citation>
    <scope>NUCLEOTIDE SEQUENCE [LARGE SCALE GENOMIC DNA]</scope>
    <source>
        <strain>ATCC 29543 / DSM 1740 / CCUG 13145 / JCM 31913 / LMG 7466 / NCTC 11488 / FDC 602W</strain>
    </source>
</reference>
<protein>
    <recommendedName>
        <fullName evidence="1">3-dehydroquinate dehydratase</fullName>
        <shortName evidence="1">3-dehydroquinase</shortName>
        <ecNumber evidence="1">4.2.1.10</ecNumber>
    </recommendedName>
    <alternativeName>
        <fullName evidence="1">Type II DHQase</fullName>
    </alternativeName>
</protein>
<dbReference type="EC" id="4.2.1.10" evidence="1"/>
<dbReference type="EMBL" id="BX571661">
    <property type="protein sequence ID" value="CAE10676.1"/>
    <property type="molecule type" value="Genomic_DNA"/>
</dbReference>
<dbReference type="RefSeq" id="WP_011139460.1">
    <property type="nucleotide sequence ID" value="NC_005090.1"/>
</dbReference>
<dbReference type="SMR" id="Q7M8I1"/>
<dbReference type="STRING" id="273121.WS1645"/>
<dbReference type="KEGG" id="wsu:WS1645"/>
<dbReference type="eggNOG" id="COG0757">
    <property type="taxonomic scope" value="Bacteria"/>
</dbReference>
<dbReference type="HOGENOM" id="CLU_090968_1_0_7"/>
<dbReference type="UniPathway" id="UPA00053">
    <property type="reaction ID" value="UER00086"/>
</dbReference>
<dbReference type="Proteomes" id="UP000000422">
    <property type="component" value="Chromosome"/>
</dbReference>
<dbReference type="GO" id="GO:0003855">
    <property type="term" value="F:3-dehydroquinate dehydratase activity"/>
    <property type="evidence" value="ECO:0007669"/>
    <property type="project" value="UniProtKB-UniRule"/>
</dbReference>
<dbReference type="GO" id="GO:0008652">
    <property type="term" value="P:amino acid biosynthetic process"/>
    <property type="evidence" value="ECO:0007669"/>
    <property type="project" value="UniProtKB-KW"/>
</dbReference>
<dbReference type="GO" id="GO:0009073">
    <property type="term" value="P:aromatic amino acid family biosynthetic process"/>
    <property type="evidence" value="ECO:0007669"/>
    <property type="project" value="UniProtKB-KW"/>
</dbReference>
<dbReference type="GO" id="GO:0009423">
    <property type="term" value="P:chorismate biosynthetic process"/>
    <property type="evidence" value="ECO:0007669"/>
    <property type="project" value="UniProtKB-UniRule"/>
</dbReference>
<dbReference type="GO" id="GO:0019631">
    <property type="term" value="P:quinate catabolic process"/>
    <property type="evidence" value="ECO:0007669"/>
    <property type="project" value="TreeGrafter"/>
</dbReference>
<dbReference type="CDD" id="cd00466">
    <property type="entry name" value="DHQase_II"/>
    <property type="match status" value="1"/>
</dbReference>
<dbReference type="Gene3D" id="3.40.50.9100">
    <property type="entry name" value="Dehydroquinase, class II"/>
    <property type="match status" value="1"/>
</dbReference>
<dbReference type="HAMAP" id="MF_00169">
    <property type="entry name" value="AroQ"/>
    <property type="match status" value="1"/>
</dbReference>
<dbReference type="InterPro" id="IPR001874">
    <property type="entry name" value="DHquinase_II"/>
</dbReference>
<dbReference type="InterPro" id="IPR018509">
    <property type="entry name" value="DHquinase_II_CS"/>
</dbReference>
<dbReference type="InterPro" id="IPR036441">
    <property type="entry name" value="DHquinase_II_sf"/>
</dbReference>
<dbReference type="NCBIfam" id="TIGR01088">
    <property type="entry name" value="aroQ"/>
    <property type="match status" value="1"/>
</dbReference>
<dbReference type="NCBIfam" id="NF003805">
    <property type="entry name" value="PRK05395.1-2"/>
    <property type="match status" value="1"/>
</dbReference>
<dbReference type="NCBIfam" id="NF003806">
    <property type="entry name" value="PRK05395.1-3"/>
    <property type="match status" value="1"/>
</dbReference>
<dbReference type="NCBIfam" id="NF003807">
    <property type="entry name" value="PRK05395.1-4"/>
    <property type="match status" value="1"/>
</dbReference>
<dbReference type="PANTHER" id="PTHR21272">
    <property type="entry name" value="CATABOLIC 3-DEHYDROQUINASE"/>
    <property type="match status" value="1"/>
</dbReference>
<dbReference type="PANTHER" id="PTHR21272:SF3">
    <property type="entry name" value="CATABOLIC 3-DEHYDROQUINASE"/>
    <property type="match status" value="1"/>
</dbReference>
<dbReference type="Pfam" id="PF01220">
    <property type="entry name" value="DHquinase_II"/>
    <property type="match status" value="1"/>
</dbReference>
<dbReference type="PIRSF" id="PIRSF001399">
    <property type="entry name" value="DHquinase_II"/>
    <property type="match status" value="1"/>
</dbReference>
<dbReference type="SUPFAM" id="SSF52304">
    <property type="entry name" value="Type II 3-dehydroquinate dehydratase"/>
    <property type="match status" value="1"/>
</dbReference>
<dbReference type="PROSITE" id="PS01029">
    <property type="entry name" value="DEHYDROQUINASE_II"/>
    <property type="match status" value="1"/>
</dbReference>
<proteinExistence type="inferred from homology"/>